<gene>
    <name type="primary">bglA</name>
</gene>
<protein>
    <recommendedName>
        <fullName>Beta-glucanase</fullName>
        <ecNumber>3.2.1.73</ecNumber>
    </recommendedName>
    <alternativeName>
        <fullName>1,3-1,4-beta-D-glucan 4-glucanohydrolase</fullName>
    </alternativeName>
    <alternativeName>
        <fullName>Endo-beta-1,3-1,4 glucanase</fullName>
    </alternativeName>
    <alternativeName>
        <fullName>Lichenase</fullName>
    </alternativeName>
</protein>
<keyword id="KW-1015">Disulfide bond</keyword>
<keyword id="KW-0326">Glycosidase</keyword>
<keyword id="KW-0378">Hydrolase</keyword>
<keyword id="KW-0732">Signal</keyword>
<feature type="signal peptide">
    <location>
        <begin position="1"/>
        <end position="25"/>
    </location>
</feature>
<feature type="chain" id="PRO_0000011786" description="Beta-glucanase">
    <location>
        <begin position="26"/>
        <end position="239"/>
    </location>
</feature>
<feature type="domain" description="GH16" evidence="2">
    <location>
        <begin position="26"/>
        <end position="239"/>
    </location>
</feature>
<feature type="active site" description="Nucleophile" evidence="3">
    <location>
        <position position="134"/>
    </location>
</feature>
<feature type="disulfide bond" evidence="1">
    <location>
        <begin position="57"/>
        <end position="86"/>
    </location>
</feature>
<name>GUB_BACAM</name>
<evidence type="ECO:0000250" key="1"/>
<evidence type="ECO:0000255" key="2">
    <source>
        <dbReference type="PROSITE-ProRule" id="PRU01098"/>
    </source>
</evidence>
<evidence type="ECO:0000255" key="3">
    <source>
        <dbReference type="PROSITE-ProRule" id="PRU10064"/>
    </source>
</evidence>
<evidence type="ECO:0000305" key="4"/>
<reference key="1">
    <citation type="journal article" date="1986" name="Gene">
        <title>The beta-glucanase gene from Bacillus amyloliquefaciens shows extensive homology with that of Bacillus subtilis.</title>
        <authorList>
            <person name="Hofemeister J."/>
            <person name="Kurtz A."/>
            <person name="Borriss R."/>
            <person name="Knowles J."/>
        </authorList>
    </citation>
    <scope>NUCLEOTIDE SEQUENCE [GENOMIC DNA]</scope>
    <source>
        <strain>BE 20/78</strain>
    </source>
</reference>
<sequence>MKRVLLILVTGLFMSLCGITSSVSAQTGGSFFEPFNSYNSGLWQKADGYSNGDMFNCTWRANNVSMTSLGEMRLALTSPSYNKFDCGENRSVQTYGYGLYEVRMKPAKNTGIVSSFFTYTGPTEGTPWDEIDIEFLGKDTTKVQFNYYTNGAGNHEKFADLGFDAANAYHTYAFDWQPNSIKWYVDGQLKHTATTQIPAAPGKIMMNLWNGTGVDDWLGSYNGVNPIYAHYDWMRYRKK</sequence>
<organism>
    <name type="scientific">Bacillus amyloliquefaciens</name>
    <name type="common">Bacillus velezensis</name>
    <dbReference type="NCBI Taxonomy" id="1390"/>
    <lineage>
        <taxon>Bacteria</taxon>
        <taxon>Bacillati</taxon>
        <taxon>Bacillota</taxon>
        <taxon>Bacilli</taxon>
        <taxon>Bacillales</taxon>
        <taxon>Bacillaceae</taxon>
        <taxon>Bacillus</taxon>
        <taxon>Bacillus amyloliquefaciens group</taxon>
    </lineage>
</organism>
<proteinExistence type="inferred from homology"/>
<dbReference type="EC" id="3.2.1.73"/>
<dbReference type="EMBL" id="M15674">
    <property type="protein sequence ID" value="AAA87323.1"/>
    <property type="molecule type" value="Genomic_DNA"/>
</dbReference>
<dbReference type="PIR" id="A29091">
    <property type="entry name" value="A29091"/>
</dbReference>
<dbReference type="SMR" id="P07980"/>
<dbReference type="STRING" id="692420.BAMF_3732"/>
<dbReference type="CAZy" id="GH16">
    <property type="family name" value="Glycoside Hydrolase Family 16"/>
</dbReference>
<dbReference type="eggNOG" id="COG2273">
    <property type="taxonomic scope" value="Bacteria"/>
</dbReference>
<dbReference type="BRENDA" id="3.2.1.73">
    <property type="organism ID" value="630"/>
</dbReference>
<dbReference type="GO" id="GO:0042972">
    <property type="term" value="F:licheninase activity"/>
    <property type="evidence" value="ECO:0007669"/>
    <property type="project" value="UniProtKB-EC"/>
</dbReference>
<dbReference type="GO" id="GO:0005975">
    <property type="term" value="P:carbohydrate metabolic process"/>
    <property type="evidence" value="ECO:0007669"/>
    <property type="project" value="InterPro"/>
</dbReference>
<dbReference type="CDD" id="cd02175">
    <property type="entry name" value="GH16_lichenase"/>
    <property type="match status" value="1"/>
</dbReference>
<dbReference type="Gene3D" id="2.60.120.200">
    <property type="match status" value="1"/>
</dbReference>
<dbReference type="InterPro" id="IPR044791">
    <property type="entry name" value="Beta-glucanase/XTH"/>
</dbReference>
<dbReference type="InterPro" id="IPR008264">
    <property type="entry name" value="Beta_glucanase"/>
</dbReference>
<dbReference type="InterPro" id="IPR013320">
    <property type="entry name" value="ConA-like_dom_sf"/>
</dbReference>
<dbReference type="InterPro" id="IPR000757">
    <property type="entry name" value="GH16"/>
</dbReference>
<dbReference type="InterPro" id="IPR008263">
    <property type="entry name" value="GH16_AS"/>
</dbReference>
<dbReference type="NCBIfam" id="NF047856">
    <property type="entry name" value="BGlucanaseBglS"/>
    <property type="match status" value="1"/>
</dbReference>
<dbReference type="PANTHER" id="PTHR31062">
    <property type="entry name" value="XYLOGLUCAN ENDOTRANSGLUCOSYLASE/HYDROLASE PROTEIN 8-RELATED"/>
    <property type="match status" value="1"/>
</dbReference>
<dbReference type="Pfam" id="PF00722">
    <property type="entry name" value="Glyco_hydro_16"/>
    <property type="match status" value="1"/>
</dbReference>
<dbReference type="PRINTS" id="PR00737">
    <property type="entry name" value="GLHYDRLASE16"/>
</dbReference>
<dbReference type="SUPFAM" id="SSF49899">
    <property type="entry name" value="Concanavalin A-like lectins/glucanases"/>
    <property type="match status" value="1"/>
</dbReference>
<dbReference type="PROSITE" id="PS01034">
    <property type="entry name" value="GH16_1"/>
    <property type="match status" value="1"/>
</dbReference>
<dbReference type="PROSITE" id="PS51762">
    <property type="entry name" value="GH16_2"/>
    <property type="match status" value="1"/>
</dbReference>
<accession>P07980</accession>
<comment type="catalytic activity">
    <reaction>
        <text>Hydrolysis of (1-&gt;4)-beta-D-glucosidic linkages in beta-D-glucans containing (1-&gt;3)- and (1-&gt;4)-bonds.</text>
        <dbReference type="EC" id="3.2.1.73"/>
    </reaction>
</comment>
<comment type="miscellaneous">
    <text>Beta-glucanases of Bacillus have a substrate range similar to lichenase of germinating barley.</text>
</comment>
<comment type="similarity">
    <text evidence="4">Belongs to the glycosyl hydrolase 16 family.</text>
</comment>